<reference evidence="20 21" key="1">
    <citation type="journal article" date="1994" name="J. Biol. Chem.">
        <title>Identification and characterization of SPRK, a novel src-homology 3 domain-containing proline-rich kinase with serine/threonine kinase activity.</title>
        <authorList>
            <person name="Gallo K.A."/>
            <person name="Mark M.R."/>
            <person name="Scadden D.T."/>
            <person name="Wang Z."/>
            <person name="Gu Q."/>
            <person name="Godowski P.J."/>
        </authorList>
    </citation>
    <scope>NUCLEOTIDE SEQUENCE [MRNA] (ISOFORM 1)</scope>
    <scope>FUNCTION</scope>
    <scope>CATALYTIC ACTIVITY</scope>
    <scope>TISSUE SPECIFICITY</scope>
    <scope>AUTOPHOSPHORYLATION</scope>
    <scope>MUTAGENESIS OF LYS-144 AND GLU-164</scope>
    <source>
        <tissue>Megakaryocyte</tissue>
    </source>
</reference>
<reference evidence="20 22" key="2">
    <citation type="journal article" date="1994" name="Oncogene">
        <title>MLK-3: identification of a widely-expressed protein kinase bearing an SH3 domain and a leucine zipper-basic region domain.</title>
        <authorList>
            <person name="Ing Y.L."/>
            <person name="Leung I.W.L."/>
            <person name="Heng H.H.Q."/>
            <person name="Tsui L.-C."/>
            <person name="Lassam N.J."/>
        </authorList>
    </citation>
    <scope>NUCLEOTIDE SEQUENCE [MRNA] (ISOFORM 1)</scope>
    <scope>TISSUE SPECIFICITY</scope>
    <source>
        <tissue evidence="22">Thymus</tissue>
    </source>
</reference>
<reference key="3">
    <citation type="journal article" date="2004" name="Nat. Genet.">
        <title>Complete sequencing and characterization of 21,243 full-length human cDNAs.</title>
        <authorList>
            <person name="Ota T."/>
            <person name="Suzuki Y."/>
            <person name="Nishikawa T."/>
            <person name="Otsuki T."/>
            <person name="Sugiyama T."/>
            <person name="Irie R."/>
            <person name="Wakamatsu A."/>
            <person name="Hayashi K."/>
            <person name="Sato H."/>
            <person name="Nagai K."/>
            <person name="Kimura K."/>
            <person name="Makita H."/>
            <person name="Sekine M."/>
            <person name="Obayashi M."/>
            <person name="Nishi T."/>
            <person name="Shibahara T."/>
            <person name="Tanaka T."/>
            <person name="Ishii S."/>
            <person name="Yamamoto J."/>
            <person name="Saito K."/>
            <person name="Kawai Y."/>
            <person name="Isono Y."/>
            <person name="Nakamura Y."/>
            <person name="Nagahari K."/>
            <person name="Murakami K."/>
            <person name="Yasuda T."/>
            <person name="Iwayanagi T."/>
            <person name="Wagatsuma M."/>
            <person name="Shiratori A."/>
            <person name="Sudo H."/>
            <person name="Hosoiri T."/>
            <person name="Kaku Y."/>
            <person name="Kodaira H."/>
            <person name="Kondo H."/>
            <person name="Sugawara M."/>
            <person name="Takahashi M."/>
            <person name="Kanda K."/>
            <person name="Yokoi T."/>
            <person name="Furuya T."/>
            <person name="Kikkawa E."/>
            <person name="Omura Y."/>
            <person name="Abe K."/>
            <person name="Kamihara K."/>
            <person name="Katsuta N."/>
            <person name="Sato K."/>
            <person name="Tanikawa M."/>
            <person name="Yamazaki M."/>
            <person name="Ninomiya K."/>
            <person name="Ishibashi T."/>
            <person name="Yamashita H."/>
            <person name="Murakawa K."/>
            <person name="Fujimori K."/>
            <person name="Tanai H."/>
            <person name="Kimata M."/>
            <person name="Watanabe M."/>
            <person name="Hiraoka S."/>
            <person name="Chiba Y."/>
            <person name="Ishida S."/>
            <person name="Ono Y."/>
            <person name="Takiguchi S."/>
            <person name="Watanabe S."/>
            <person name="Yosida M."/>
            <person name="Hotuta T."/>
            <person name="Kusano J."/>
            <person name="Kanehori K."/>
            <person name="Takahashi-Fujii A."/>
            <person name="Hara H."/>
            <person name="Tanase T.-O."/>
            <person name="Nomura Y."/>
            <person name="Togiya S."/>
            <person name="Komai F."/>
            <person name="Hara R."/>
            <person name="Takeuchi K."/>
            <person name="Arita M."/>
            <person name="Imose N."/>
            <person name="Musashino K."/>
            <person name="Yuuki H."/>
            <person name="Oshima A."/>
            <person name="Sasaki N."/>
            <person name="Aotsuka S."/>
            <person name="Yoshikawa Y."/>
            <person name="Matsunawa H."/>
            <person name="Ichihara T."/>
            <person name="Shiohata N."/>
            <person name="Sano S."/>
            <person name="Moriya S."/>
            <person name="Momiyama H."/>
            <person name="Satoh N."/>
            <person name="Takami S."/>
            <person name="Terashima Y."/>
            <person name="Suzuki O."/>
            <person name="Nakagawa S."/>
            <person name="Senoh A."/>
            <person name="Mizoguchi H."/>
            <person name="Goto Y."/>
            <person name="Shimizu F."/>
            <person name="Wakebe H."/>
            <person name="Hishigaki H."/>
            <person name="Watanabe T."/>
            <person name="Sugiyama A."/>
            <person name="Takemoto M."/>
            <person name="Kawakami B."/>
            <person name="Yamazaki M."/>
            <person name="Watanabe K."/>
            <person name="Kumagai A."/>
            <person name="Itakura S."/>
            <person name="Fukuzumi Y."/>
            <person name="Fujimori Y."/>
            <person name="Komiyama M."/>
            <person name="Tashiro H."/>
            <person name="Tanigami A."/>
            <person name="Fujiwara T."/>
            <person name="Ono T."/>
            <person name="Yamada K."/>
            <person name="Fujii Y."/>
            <person name="Ozaki K."/>
            <person name="Hirao M."/>
            <person name="Ohmori Y."/>
            <person name="Kawabata A."/>
            <person name="Hikiji T."/>
            <person name="Kobatake N."/>
            <person name="Inagaki H."/>
            <person name="Ikema Y."/>
            <person name="Okamoto S."/>
            <person name="Okitani R."/>
            <person name="Kawakami T."/>
            <person name="Noguchi S."/>
            <person name="Itoh T."/>
            <person name="Shigeta K."/>
            <person name="Senba T."/>
            <person name="Matsumura K."/>
            <person name="Nakajima Y."/>
            <person name="Mizuno T."/>
            <person name="Morinaga M."/>
            <person name="Sasaki M."/>
            <person name="Togashi T."/>
            <person name="Oyama M."/>
            <person name="Hata H."/>
            <person name="Watanabe M."/>
            <person name="Komatsu T."/>
            <person name="Mizushima-Sugano J."/>
            <person name="Satoh T."/>
            <person name="Shirai Y."/>
            <person name="Takahashi Y."/>
            <person name="Nakagawa K."/>
            <person name="Okumura K."/>
            <person name="Nagase T."/>
            <person name="Nomura N."/>
            <person name="Kikuchi H."/>
            <person name="Masuho Y."/>
            <person name="Yamashita R."/>
            <person name="Nakai K."/>
            <person name="Yada T."/>
            <person name="Nakamura Y."/>
            <person name="Ohara O."/>
            <person name="Isogai T."/>
            <person name="Sugano S."/>
        </authorList>
    </citation>
    <scope>NUCLEOTIDE SEQUENCE [LARGE SCALE MRNA] (ISOFORM 2)</scope>
    <source>
        <tissue>Brain</tissue>
    </source>
</reference>
<reference key="4">
    <citation type="submission" date="2005-04" db="EMBL/GenBank/DDBJ databases">
        <authorList>
            <person name="Suzuki Y."/>
            <person name="Sugano S."/>
            <person name="Totoki Y."/>
            <person name="Toyoda A."/>
            <person name="Takeda T."/>
            <person name="Sakaki Y."/>
            <person name="Tanaka A."/>
            <person name="Yokoyama S."/>
        </authorList>
    </citation>
    <scope>NUCLEOTIDE SEQUENCE [LARGE SCALE MRNA] (ISOFORM 1)</scope>
    <source>
        <tissue>Liver</tissue>
        <tissue>Spleen</tissue>
    </source>
</reference>
<reference key="5">
    <citation type="journal article" date="2006" name="Nature">
        <title>Human chromosome 11 DNA sequence and analysis including novel gene identification.</title>
        <authorList>
            <person name="Taylor T.D."/>
            <person name="Noguchi H."/>
            <person name="Totoki Y."/>
            <person name="Toyoda A."/>
            <person name="Kuroki Y."/>
            <person name="Dewar K."/>
            <person name="Lloyd C."/>
            <person name="Itoh T."/>
            <person name="Takeda T."/>
            <person name="Kim D.-W."/>
            <person name="She X."/>
            <person name="Barlow K.F."/>
            <person name="Bloom T."/>
            <person name="Bruford E."/>
            <person name="Chang J.L."/>
            <person name="Cuomo C.A."/>
            <person name="Eichler E."/>
            <person name="FitzGerald M.G."/>
            <person name="Jaffe D.B."/>
            <person name="LaButti K."/>
            <person name="Nicol R."/>
            <person name="Park H.-S."/>
            <person name="Seaman C."/>
            <person name="Sougnez C."/>
            <person name="Yang X."/>
            <person name="Zimmer A.R."/>
            <person name="Zody M.C."/>
            <person name="Birren B.W."/>
            <person name="Nusbaum C."/>
            <person name="Fujiyama A."/>
            <person name="Hattori M."/>
            <person name="Rogers J."/>
            <person name="Lander E.S."/>
            <person name="Sakaki Y."/>
        </authorList>
    </citation>
    <scope>NUCLEOTIDE SEQUENCE [LARGE SCALE GENOMIC DNA]</scope>
</reference>
<reference evidence="20 24" key="6">
    <citation type="journal article" date="2004" name="Genome Res.">
        <title>The status, quality, and expansion of the NIH full-length cDNA project: the Mammalian Gene Collection (MGC).</title>
        <authorList>
            <consortium name="The MGC Project Team"/>
        </authorList>
    </citation>
    <scope>NUCLEOTIDE SEQUENCE [LARGE SCALE MRNA] (ISOFORM 1)</scope>
    <scope>VARIANT HIS-252</scope>
    <source>
        <tissue evidence="23">Brain</tissue>
        <tissue evidence="12">Hippocampus</tissue>
    </source>
</reference>
<reference key="7">
    <citation type="journal article" date="1996" name="EMBO J.">
        <title>MLK-3 activates the SAPK/JNK and p38/RK pathways via SEK1 and MKK3/6.</title>
        <authorList>
            <person name="Tibbles L.A."/>
            <person name="Ing Y.L."/>
            <person name="Kiefer F."/>
            <person name="Chan J."/>
            <person name="Iscove N."/>
            <person name="Woodgett J.R."/>
            <person name="Lassam N.J."/>
        </authorList>
    </citation>
    <scope>INTERACTION WITH MAP2K4/MKK4</scope>
    <scope>FUNCTION IN PHOSPHORYLATION OF MAP2K4/MKK4</scope>
</reference>
<reference evidence="20" key="8">
    <citation type="journal article" date="1998" name="J. Biol. Chem.">
        <title>Dimerization via tandem leucine zippers is essential for the activation of the mitogen-activated protein kinase kinase kinase, MLK-3.</title>
        <authorList>
            <person name="Leung I.W.L."/>
            <person name="Lassam N.J."/>
        </authorList>
    </citation>
    <scope>ACTIVITY REGULATION</scope>
    <scope>HOMODIMERIZATION</scope>
</reference>
<reference evidence="20" key="9">
    <citation type="journal article" date="2001" name="J. Biol. Chem.">
        <title>The kinase activation loop is the key to mixed lineage kinase-3 activation via both autophosphorylation and hematopoietic progenitor kinase 1 phosphorylation.</title>
        <authorList>
            <person name="Leung I.W.L."/>
            <person name="Lassam N.J."/>
        </authorList>
    </citation>
    <scope>ACTIVITY REGULATION</scope>
    <scope>PHOSPHORYLATION AT THR-277 AND SER-281</scope>
    <scope>MUTAGENESIS OF LYS-144; THR-277; THR-278 AND SER-281</scope>
</reference>
<reference evidence="20" key="10">
    <citation type="journal article" date="2002" name="Biochemistry">
        <title>Identification of in vivo phosphorylation sites of MLK3 by mass spectrometry and phosphopeptide mapping.</title>
        <authorList>
            <person name="Vacratsis P.O."/>
            <person name="Phinney B.S."/>
            <person name="Gage D.A."/>
            <person name="Gallo K.A."/>
        </authorList>
    </citation>
    <scope>PHOSPHORYLATION AT SER-524; SER-555; SER-556; SER-654; SER-705; SER-724; SER-727; SER-740; SER-758; SER-770 AND SER-793</scope>
</reference>
<reference evidence="20" key="11">
    <citation type="journal article" date="2003" name="Mol. Biol. Cell">
        <title>A new identity for MLK3 as an NIMA-related, cell cycle-regulated kinase that is localized near centrosomes and influences microtubule organization.</title>
        <authorList>
            <person name="Swenson K.I."/>
            <person name="Winkler K.E."/>
            <person name="Means A.R."/>
        </authorList>
    </citation>
    <scope>FUNCTION</scope>
    <scope>SUBCELLULAR LOCATION</scope>
</reference>
<reference evidence="20" key="12">
    <citation type="journal article" date="2004" name="Nat. Cell Biol.">
        <title>MLK3 is required for mitogen activation of B-Raf, ERK and cell proliferation.</title>
        <authorList>
            <person name="Chadee D.N."/>
            <person name="Kyriakis J.M."/>
        </authorList>
    </citation>
    <scope>FUNCTION</scope>
</reference>
<reference key="13">
    <citation type="journal article" date="2006" name="Nat. Biotechnol.">
        <title>A probability-based approach for high-throughput protein phosphorylation analysis and site localization.</title>
        <authorList>
            <person name="Beausoleil S.A."/>
            <person name="Villen J."/>
            <person name="Gerber S.A."/>
            <person name="Rush J."/>
            <person name="Gygi S.P."/>
        </authorList>
    </citation>
    <scope>PHOSPHORYLATION [LARGE SCALE ANALYSIS] AT SER-507</scope>
    <scope>IDENTIFICATION BY MASS SPECTROMETRY [LARGE SCALE ANALYSIS]</scope>
    <source>
        <tissue>Cervix carcinoma</tissue>
    </source>
</reference>
<reference key="14">
    <citation type="journal article" date="2008" name="Mol. Cell">
        <title>Kinase-selective enrichment enables quantitative phosphoproteomics of the kinome across the cell cycle.</title>
        <authorList>
            <person name="Daub H."/>
            <person name="Olsen J.V."/>
            <person name="Bairlein M."/>
            <person name="Gnad F."/>
            <person name="Oppermann F.S."/>
            <person name="Korner R."/>
            <person name="Greff Z."/>
            <person name="Keri G."/>
            <person name="Stemmann O."/>
            <person name="Mann M."/>
        </authorList>
    </citation>
    <scope>PHOSPHORYLATION [LARGE SCALE ANALYSIS] AT SER-11; SER-507; SER-548; SER-705; THR-708; SER-748; SER-758; SER-793 AND SER-815</scope>
    <scope>IDENTIFICATION BY MASS SPECTROMETRY [LARGE SCALE ANALYSIS]</scope>
    <source>
        <tissue>Cervix carcinoma</tissue>
    </source>
</reference>
<reference key="15">
    <citation type="journal article" date="2008" name="Proc. Natl. Acad. Sci. U.S.A.">
        <title>A quantitative atlas of mitotic phosphorylation.</title>
        <authorList>
            <person name="Dephoure N."/>
            <person name="Zhou C."/>
            <person name="Villen J."/>
            <person name="Beausoleil S.A."/>
            <person name="Bakalarski C.E."/>
            <person name="Elledge S.J."/>
            <person name="Gygi S.P."/>
        </authorList>
    </citation>
    <scope>PHOSPHORYLATION [LARGE SCALE ANALYSIS] AT SER-789 AND SER-793</scope>
    <scope>IDENTIFICATION BY MASS SPECTROMETRY [LARGE SCALE ANALYSIS]</scope>
    <source>
        <tissue>Cervix carcinoma</tissue>
    </source>
</reference>
<reference key="16">
    <citation type="journal article" date="2009" name="Mol. Cell. Proteomics">
        <title>Large-scale proteomics analysis of the human kinome.</title>
        <authorList>
            <person name="Oppermann F.S."/>
            <person name="Gnad F."/>
            <person name="Olsen J.V."/>
            <person name="Hornberger R."/>
            <person name="Greff Z."/>
            <person name="Keri G."/>
            <person name="Mann M."/>
            <person name="Daub H."/>
        </authorList>
    </citation>
    <scope>PHOSPHORYLATION [LARGE SCALE ANALYSIS] AT SER-394; SER-507; SER-548; SER-693; SER-705; SER-748; SER-758; SER-789 AND SER-793</scope>
    <scope>IDENTIFICATION BY MASS SPECTROMETRY [LARGE SCALE ANALYSIS]</scope>
</reference>
<reference key="17">
    <citation type="journal article" date="2009" name="Sci. Signal.">
        <title>Quantitative phosphoproteomic analysis of T cell receptor signaling reveals system-wide modulation of protein-protein interactions.</title>
        <authorList>
            <person name="Mayya V."/>
            <person name="Lundgren D.H."/>
            <person name="Hwang S.-I."/>
            <person name="Rezaul K."/>
            <person name="Wu L."/>
            <person name="Eng J.K."/>
            <person name="Rodionov V."/>
            <person name="Han D.K."/>
        </authorList>
    </citation>
    <scope>PHOSPHORYLATION [LARGE SCALE ANALYSIS] AT SER-789 AND SER-793</scope>
    <scope>IDENTIFICATION BY MASS SPECTROMETRY [LARGE SCALE ANALYSIS]</scope>
    <source>
        <tissue>Leukemic T-cell</tissue>
    </source>
</reference>
<reference key="18">
    <citation type="journal article" date="2013" name="J. Proteome Res.">
        <title>Toward a comprehensive characterization of a human cancer cell phosphoproteome.</title>
        <authorList>
            <person name="Zhou H."/>
            <person name="Di Palma S."/>
            <person name="Preisinger C."/>
            <person name="Peng M."/>
            <person name="Polat A.N."/>
            <person name="Heck A.J."/>
            <person name="Mohammed S."/>
        </authorList>
    </citation>
    <scope>PHOSPHORYLATION [LARGE SCALE ANALYSIS] AT SER-507; SER-524 AND SER-548</scope>
    <scope>IDENTIFICATION BY MASS SPECTROMETRY [LARGE SCALE ANALYSIS]</scope>
    <source>
        <tissue>Cervix carcinoma</tissue>
        <tissue>Erythroleukemia</tissue>
    </source>
</reference>
<reference key="19">
    <citation type="journal article" date="2014" name="J. Proteomics">
        <title>An enzyme assisted RP-RPLC approach for in-depth analysis of human liver phosphoproteome.</title>
        <authorList>
            <person name="Bian Y."/>
            <person name="Song C."/>
            <person name="Cheng K."/>
            <person name="Dong M."/>
            <person name="Wang F."/>
            <person name="Huang J."/>
            <person name="Sun D."/>
            <person name="Wang L."/>
            <person name="Ye M."/>
            <person name="Zou H."/>
        </authorList>
    </citation>
    <scope>IDENTIFICATION BY MASS SPECTROMETRY [LARGE SCALE ANALYSIS]</scope>
    <source>
        <tissue>Liver</tissue>
    </source>
</reference>
<reference key="20">
    <citation type="journal article" date="2007" name="Nature">
        <title>Patterns of somatic mutation in human cancer genomes.</title>
        <authorList>
            <person name="Greenman C."/>
            <person name="Stephens P."/>
            <person name="Smith R."/>
            <person name="Dalgliesh G.L."/>
            <person name="Hunter C."/>
            <person name="Bignell G."/>
            <person name="Davies H."/>
            <person name="Teague J."/>
            <person name="Butler A."/>
            <person name="Stevens C."/>
            <person name="Edkins S."/>
            <person name="O'Meara S."/>
            <person name="Vastrik I."/>
            <person name="Schmidt E.E."/>
            <person name="Avis T."/>
            <person name="Barthorpe S."/>
            <person name="Bhamra G."/>
            <person name="Buck G."/>
            <person name="Choudhury B."/>
            <person name="Clements J."/>
            <person name="Cole J."/>
            <person name="Dicks E."/>
            <person name="Forbes S."/>
            <person name="Gray K."/>
            <person name="Halliday K."/>
            <person name="Harrison R."/>
            <person name="Hills K."/>
            <person name="Hinton J."/>
            <person name="Jenkinson A."/>
            <person name="Jones D."/>
            <person name="Menzies A."/>
            <person name="Mironenko T."/>
            <person name="Perry J."/>
            <person name="Raine K."/>
            <person name="Richardson D."/>
            <person name="Shepherd R."/>
            <person name="Small A."/>
            <person name="Tofts C."/>
            <person name="Varian J."/>
            <person name="Webb T."/>
            <person name="West S."/>
            <person name="Widaa S."/>
            <person name="Yates A."/>
            <person name="Cahill D.P."/>
            <person name="Louis D.N."/>
            <person name="Goldstraw P."/>
            <person name="Nicholson A.G."/>
            <person name="Brasseur F."/>
            <person name="Looijenga L."/>
            <person name="Weber B.L."/>
            <person name="Chiew Y.-E."/>
            <person name="DeFazio A."/>
            <person name="Greaves M.F."/>
            <person name="Green A.R."/>
            <person name="Campbell P."/>
            <person name="Birney E."/>
            <person name="Easton D.F."/>
            <person name="Chenevix-Trench G."/>
            <person name="Tan M.-H."/>
            <person name="Khoo S.K."/>
            <person name="Teh B.T."/>
            <person name="Yuen S.T."/>
            <person name="Leung S.Y."/>
            <person name="Wooster R."/>
            <person name="Futreal P.A."/>
            <person name="Stratton M.R."/>
        </authorList>
    </citation>
    <scope>VARIANTS [LARGE SCALE ANALYSIS] VAL-151 AND GLY-282</scope>
</reference>
<proteinExistence type="evidence at protein level"/>
<dbReference type="EC" id="2.7.11.25"/>
<dbReference type="EMBL" id="U07747">
    <property type="protein sequence ID" value="AAA19647.1"/>
    <property type="molecule type" value="mRNA"/>
</dbReference>
<dbReference type="EMBL" id="L32976">
    <property type="protein sequence ID" value="AAA59859.1"/>
    <property type="molecule type" value="mRNA"/>
</dbReference>
<dbReference type="EMBL" id="AB209655">
    <property type="protein sequence ID" value="BAD92892.1"/>
    <property type="status" value="ALT_INIT"/>
    <property type="molecule type" value="mRNA"/>
</dbReference>
<dbReference type="EMBL" id="AK299609">
    <property type="protein sequence ID" value="BAG61538.1"/>
    <property type="molecule type" value="mRNA"/>
</dbReference>
<dbReference type="EMBL" id="AK316032">
    <property type="protein sequence ID" value="BAH14403.1"/>
    <property type="molecule type" value="mRNA"/>
</dbReference>
<dbReference type="EMBL" id="AK222781">
    <property type="protein sequence ID" value="BAD96501.1"/>
    <property type="molecule type" value="mRNA"/>
</dbReference>
<dbReference type="EMBL" id="AP001362">
    <property type="status" value="NOT_ANNOTATED_CDS"/>
    <property type="molecule type" value="Genomic_DNA"/>
</dbReference>
<dbReference type="EMBL" id="BC011263">
    <property type="protein sequence ID" value="AAH11263.1"/>
    <property type="molecule type" value="mRNA"/>
</dbReference>
<dbReference type="EMBL" id="BC064543">
    <property type="protein sequence ID" value="AAH64543.1"/>
    <property type="molecule type" value="mRNA"/>
</dbReference>
<dbReference type="CCDS" id="CCDS8107.1">
    <molecule id="Q16584-1"/>
</dbReference>
<dbReference type="PIR" id="A53800">
    <property type="entry name" value="A53800"/>
</dbReference>
<dbReference type="RefSeq" id="NP_002410.1">
    <molecule id="Q16584-1"/>
    <property type="nucleotide sequence ID" value="NM_002419.4"/>
</dbReference>
<dbReference type="PDB" id="5K26">
    <property type="method" value="X-ray"/>
    <property type="resolution" value="1.20 A"/>
    <property type="chains" value="A/B=41-105"/>
</dbReference>
<dbReference type="PDB" id="5K28">
    <property type="method" value="X-ray"/>
    <property type="resolution" value="1.50 A"/>
    <property type="chains" value="A/B=44-105"/>
</dbReference>
<dbReference type="PDB" id="6AQB">
    <property type="method" value="X-ray"/>
    <property type="resolution" value="1.50 A"/>
    <property type="chains" value="A/B=41-108"/>
</dbReference>
<dbReference type="PDB" id="6CQ7">
    <property type="method" value="X-ray"/>
    <property type="resolution" value="2.00 A"/>
    <property type="chains" value="A=41-108"/>
</dbReference>
<dbReference type="PDBsum" id="5K26"/>
<dbReference type="PDBsum" id="5K28"/>
<dbReference type="PDBsum" id="6AQB"/>
<dbReference type="PDBsum" id="6CQ7"/>
<dbReference type="SMR" id="Q16584"/>
<dbReference type="BioGRID" id="110442">
    <property type="interactions" value="60"/>
</dbReference>
<dbReference type="CORUM" id="Q16584"/>
<dbReference type="FunCoup" id="Q16584">
    <property type="interactions" value="734"/>
</dbReference>
<dbReference type="IntAct" id="Q16584">
    <property type="interactions" value="21"/>
</dbReference>
<dbReference type="MINT" id="Q16584"/>
<dbReference type="STRING" id="9606.ENSP00000309597"/>
<dbReference type="BindingDB" id="Q16584"/>
<dbReference type="ChEMBL" id="CHEMBL2708"/>
<dbReference type="DrugBank" id="DB12010">
    <property type="generic name" value="Fostamatinib"/>
</dbReference>
<dbReference type="DrugCentral" id="Q16584"/>
<dbReference type="GuidetoPHARMACOLOGY" id="2071"/>
<dbReference type="GlyGen" id="Q16584">
    <property type="glycosylation" value="6 sites, 1 O-linked glycan (1 site)"/>
</dbReference>
<dbReference type="iPTMnet" id="Q16584"/>
<dbReference type="PhosphoSitePlus" id="Q16584"/>
<dbReference type="BioMuta" id="MAP3K11"/>
<dbReference type="DMDM" id="71153819"/>
<dbReference type="CPTAC" id="CPTAC-1047"/>
<dbReference type="CPTAC" id="CPTAC-833"/>
<dbReference type="CPTAC" id="CPTAC-835"/>
<dbReference type="CPTAC" id="CPTAC-836"/>
<dbReference type="CPTAC" id="CPTAC-837"/>
<dbReference type="CPTAC" id="CPTAC-838"/>
<dbReference type="CPTAC" id="CPTAC-839"/>
<dbReference type="CPTAC" id="CPTAC-840"/>
<dbReference type="jPOST" id="Q16584"/>
<dbReference type="MassIVE" id="Q16584"/>
<dbReference type="PaxDb" id="9606-ENSP00000309597"/>
<dbReference type="PeptideAtlas" id="Q16584"/>
<dbReference type="ProteomicsDB" id="5004"/>
<dbReference type="ProteomicsDB" id="60929">
    <molecule id="Q16584-1"/>
</dbReference>
<dbReference type="ABCD" id="Q16584">
    <property type="antibodies" value="1 sequenced antibody"/>
</dbReference>
<dbReference type="Antibodypedia" id="29871">
    <property type="antibodies" value="316 antibodies from 34 providers"/>
</dbReference>
<dbReference type="DNASU" id="4296"/>
<dbReference type="Ensembl" id="ENST00000309100.8">
    <molecule id="Q16584-1"/>
    <property type="protein sequence ID" value="ENSP00000309597.3"/>
    <property type="gene ID" value="ENSG00000173327.8"/>
</dbReference>
<dbReference type="Ensembl" id="ENST00000530153.5">
    <molecule id="Q16584-2"/>
    <property type="protein sequence ID" value="ENSP00000433886.1"/>
    <property type="gene ID" value="ENSG00000173327.8"/>
</dbReference>
<dbReference type="GeneID" id="4296"/>
<dbReference type="KEGG" id="hsa:4296"/>
<dbReference type="MANE-Select" id="ENST00000309100.8">
    <property type="protein sequence ID" value="ENSP00000309597.3"/>
    <property type="RefSeq nucleotide sequence ID" value="NM_002419.4"/>
    <property type="RefSeq protein sequence ID" value="NP_002410.1"/>
</dbReference>
<dbReference type="UCSC" id="uc001oew.4">
    <molecule id="Q16584-1"/>
    <property type="organism name" value="human"/>
</dbReference>
<dbReference type="AGR" id="HGNC:6850"/>
<dbReference type="CTD" id="4296"/>
<dbReference type="DisGeNET" id="4296"/>
<dbReference type="GeneCards" id="MAP3K11"/>
<dbReference type="HGNC" id="HGNC:6850">
    <property type="gene designation" value="MAP3K11"/>
</dbReference>
<dbReference type="HPA" id="ENSG00000173327">
    <property type="expression patterns" value="Low tissue specificity"/>
</dbReference>
<dbReference type="MIM" id="600050">
    <property type="type" value="gene"/>
</dbReference>
<dbReference type="neXtProt" id="NX_Q16584"/>
<dbReference type="OpenTargets" id="ENSG00000173327"/>
<dbReference type="PharmGKB" id="PA30594"/>
<dbReference type="VEuPathDB" id="HostDB:ENSG00000173327"/>
<dbReference type="eggNOG" id="KOG0192">
    <property type="taxonomic scope" value="Eukaryota"/>
</dbReference>
<dbReference type="GeneTree" id="ENSGT00940000161064"/>
<dbReference type="HOGENOM" id="CLU_000288_7_14_1"/>
<dbReference type="InParanoid" id="Q16584"/>
<dbReference type="OMA" id="HLSPKMP"/>
<dbReference type="OrthoDB" id="339325at2759"/>
<dbReference type="PAN-GO" id="Q16584">
    <property type="GO annotations" value="4 GO annotations based on evolutionary models"/>
</dbReference>
<dbReference type="PhylomeDB" id="Q16584"/>
<dbReference type="TreeFam" id="TF105118"/>
<dbReference type="PathwayCommons" id="Q16584"/>
<dbReference type="Reactome" id="R-HSA-5673000">
    <property type="pathway name" value="RAF activation"/>
</dbReference>
<dbReference type="Reactome" id="R-HSA-6802946">
    <property type="pathway name" value="Signaling by moderate kinase activity BRAF mutants"/>
</dbReference>
<dbReference type="Reactome" id="R-HSA-6802955">
    <property type="pathway name" value="Paradoxical activation of RAF signaling by kinase inactive BRAF"/>
</dbReference>
<dbReference type="Reactome" id="R-HSA-9013148">
    <property type="pathway name" value="CDC42 GTPase cycle"/>
</dbReference>
<dbReference type="Reactome" id="R-HSA-9013408">
    <property type="pathway name" value="RHOG GTPase cycle"/>
</dbReference>
<dbReference type="Reactome" id="R-HSA-9013424">
    <property type="pathway name" value="RHOV GTPase cycle"/>
</dbReference>
<dbReference type="Reactome" id="R-HSA-9649948">
    <property type="pathway name" value="Signaling downstream of RAS mutants"/>
</dbReference>
<dbReference type="SABIO-RK" id="Q16584"/>
<dbReference type="SignaLink" id="Q16584"/>
<dbReference type="SIGNOR" id="Q16584"/>
<dbReference type="BioGRID-ORCS" id="4296">
    <property type="hits" value="83 hits in 1189 CRISPR screens"/>
</dbReference>
<dbReference type="CD-CODE" id="8C2F96ED">
    <property type="entry name" value="Centrosome"/>
</dbReference>
<dbReference type="ChiTaRS" id="MAP3K11">
    <property type="organism name" value="human"/>
</dbReference>
<dbReference type="GeneWiki" id="MAP3K11"/>
<dbReference type="GenomeRNAi" id="4296"/>
<dbReference type="Pharos" id="Q16584">
    <property type="development level" value="Tchem"/>
</dbReference>
<dbReference type="PRO" id="PR:Q16584"/>
<dbReference type="Proteomes" id="UP000005640">
    <property type="component" value="Chromosome 11"/>
</dbReference>
<dbReference type="RNAct" id="Q16584">
    <property type="molecule type" value="protein"/>
</dbReference>
<dbReference type="Bgee" id="ENSG00000173327">
    <property type="expression patterns" value="Expressed in sural nerve and 189 other cell types or tissues"/>
</dbReference>
<dbReference type="ExpressionAtlas" id="Q16584">
    <property type="expression patterns" value="baseline and differential"/>
</dbReference>
<dbReference type="GO" id="GO:0005813">
    <property type="term" value="C:centrosome"/>
    <property type="evidence" value="ECO:0000314"/>
    <property type="project" value="UniProtKB"/>
</dbReference>
<dbReference type="GO" id="GO:0005737">
    <property type="term" value="C:cytoplasm"/>
    <property type="evidence" value="ECO:0000318"/>
    <property type="project" value="GO_Central"/>
</dbReference>
<dbReference type="GO" id="GO:0005829">
    <property type="term" value="C:cytosol"/>
    <property type="evidence" value="ECO:0000304"/>
    <property type="project" value="Reactome"/>
</dbReference>
<dbReference type="GO" id="GO:0016020">
    <property type="term" value="C:membrane"/>
    <property type="evidence" value="ECO:0007005"/>
    <property type="project" value="UniProtKB"/>
</dbReference>
<dbReference type="GO" id="GO:0005874">
    <property type="term" value="C:microtubule"/>
    <property type="evidence" value="ECO:0000314"/>
    <property type="project" value="UniProtKB"/>
</dbReference>
<dbReference type="GO" id="GO:0005524">
    <property type="term" value="F:ATP binding"/>
    <property type="evidence" value="ECO:0007669"/>
    <property type="project" value="UniProtKB-KW"/>
</dbReference>
<dbReference type="GO" id="GO:0042802">
    <property type="term" value="F:identical protein binding"/>
    <property type="evidence" value="ECO:0000353"/>
    <property type="project" value="UniProtKB"/>
</dbReference>
<dbReference type="GO" id="GO:0004706">
    <property type="term" value="F:JUN kinase kinase kinase activity"/>
    <property type="evidence" value="ECO:0000315"/>
    <property type="project" value="UniProtKB"/>
</dbReference>
<dbReference type="GO" id="GO:0004709">
    <property type="term" value="F:MAP kinase kinase kinase activity"/>
    <property type="evidence" value="ECO:0000315"/>
    <property type="project" value="UniProtKB"/>
</dbReference>
<dbReference type="GO" id="GO:0031434">
    <property type="term" value="F:mitogen-activated protein kinase kinase binding"/>
    <property type="evidence" value="ECO:0007669"/>
    <property type="project" value="Ensembl"/>
</dbReference>
<dbReference type="GO" id="GO:0031435">
    <property type="term" value="F:mitogen-activated protein kinase kinase kinase binding"/>
    <property type="evidence" value="ECO:0000353"/>
    <property type="project" value="UniProtKB"/>
</dbReference>
<dbReference type="GO" id="GO:0042803">
    <property type="term" value="F:protein homodimerization activity"/>
    <property type="evidence" value="ECO:0000353"/>
    <property type="project" value="UniProtKB"/>
</dbReference>
<dbReference type="GO" id="GO:0004672">
    <property type="term" value="F:protein kinase activity"/>
    <property type="evidence" value="ECO:0000304"/>
    <property type="project" value="ProtInc"/>
</dbReference>
<dbReference type="GO" id="GO:0106310">
    <property type="term" value="F:protein serine kinase activity"/>
    <property type="evidence" value="ECO:0007669"/>
    <property type="project" value="RHEA"/>
</dbReference>
<dbReference type="GO" id="GO:0004674">
    <property type="term" value="F:protein serine/threonine kinase activity"/>
    <property type="evidence" value="ECO:0000314"/>
    <property type="project" value="UniProtKB"/>
</dbReference>
<dbReference type="GO" id="GO:0031267">
    <property type="term" value="F:small GTPase binding"/>
    <property type="evidence" value="ECO:0007669"/>
    <property type="project" value="Ensembl"/>
</dbReference>
<dbReference type="GO" id="GO:0044843">
    <property type="term" value="P:cell cycle G1/S phase transition"/>
    <property type="evidence" value="ECO:0000315"/>
    <property type="project" value="UniProtKB"/>
</dbReference>
<dbReference type="GO" id="GO:0007254">
    <property type="term" value="P:JNK cascade"/>
    <property type="evidence" value="ECO:0000315"/>
    <property type="project" value="UniProtKB"/>
</dbReference>
<dbReference type="GO" id="GO:0000165">
    <property type="term" value="P:MAPK cascade"/>
    <property type="evidence" value="ECO:0000315"/>
    <property type="project" value="UniProtKB"/>
</dbReference>
<dbReference type="GO" id="GO:0007017">
    <property type="term" value="P:microtubule-based process"/>
    <property type="evidence" value="ECO:0000315"/>
    <property type="project" value="UniProtKB"/>
</dbReference>
<dbReference type="GO" id="GO:0043065">
    <property type="term" value="P:positive regulation of apoptotic process"/>
    <property type="evidence" value="ECO:0000318"/>
    <property type="project" value="GO_Central"/>
</dbReference>
<dbReference type="GO" id="GO:0046330">
    <property type="term" value="P:positive regulation of JNK cascade"/>
    <property type="evidence" value="ECO:0000315"/>
    <property type="project" value="UniProtKB"/>
</dbReference>
<dbReference type="GO" id="GO:0043507">
    <property type="term" value="P:positive regulation of JUN kinase activity"/>
    <property type="evidence" value="ECO:0000315"/>
    <property type="project" value="UniProtKB"/>
</dbReference>
<dbReference type="GO" id="GO:0043525">
    <property type="term" value="P:positive regulation of neuron apoptotic process"/>
    <property type="evidence" value="ECO:0007669"/>
    <property type="project" value="Ensembl"/>
</dbReference>
<dbReference type="GO" id="GO:0046777">
    <property type="term" value="P:protein autophosphorylation"/>
    <property type="evidence" value="ECO:0000314"/>
    <property type="project" value="UniProtKB"/>
</dbReference>
<dbReference type="GO" id="GO:0006468">
    <property type="term" value="P:protein phosphorylation"/>
    <property type="evidence" value="ECO:0000314"/>
    <property type="project" value="UniProtKB"/>
</dbReference>
<dbReference type="CDD" id="cd12059">
    <property type="entry name" value="SH3_MLK1-3"/>
    <property type="match status" value="1"/>
</dbReference>
<dbReference type="CDD" id="cd14147">
    <property type="entry name" value="STKc_MLK3"/>
    <property type="match status" value="1"/>
</dbReference>
<dbReference type="FunFam" id="1.10.510.10:FF:000076">
    <property type="entry name" value="Mitogen-activated protein kinase kinase kinase"/>
    <property type="match status" value="1"/>
</dbReference>
<dbReference type="FunFam" id="2.30.30.40:FF:000079">
    <property type="entry name" value="Mitogen-activated protein kinase kinase kinase"/>
    <property type="match status" value="1"/>
</dbReference>
<dbReference type="FunFam" id="3.30.200.20:FF:000085">
    <property type="entry name" value="Mitogen-activated protein kinase kinase kinase"/>
    <property type="match status" value="1"/>
</dbReference>
<dbReference type="Gene3D" id="3.30.200.20">
    <property type="entry name" value="Phosphorylase Kinase, domain 1"/>
    <property type="match status" value="1"/>
</dbReference>
<dbReference type="Gene3D" id="2.30.30.40">
    <property type="entry name" value="SH3 Domains"/>
    <property type="match status" value="1"/>
</dbReference>
<dbReference type="Gene3D" id="1.10.510.10">
    <property type="entry name" value="Transferase(Phosphotransferase) domain 1"/>
    <property type="match status" value="1"/>
</dbReference>
<dbReference type="InterPro" id="IPR011009">
    <property type="entry name" value="Kinase-like_dom_sf"/>
</dbReference>
<dbReference type="InterPro" id="IPR035779">
    <property type="entry name" value="MLK1-3_SH3"/>
</dbReference>
<dbReference type="InterPro" id="IPR016231">
    <property type="entry name" value="MLK1-4"/>
</dbReference>
<dbReference type="InterPro" id="IPR000719">
    <property type="entry name" value="Prot_kinase_dom"/>
</dbReference>
<dbReference type="InterPro" id="IPR017441">
    <property type="entry name" value="Protein_kinase_ATP_BS"/>
</dbReference>
<dbReference type="InterPro" id="IPR001245">
    <property type="entry name" value="Ser-Thr/Tyr_kinase_cat_dom"/>
</dbReference>
<dbReference type="InterPro" id="IPR008271">
    <property type="entry name" value="Ser/Thr_kinase_AS"/>
</dbReference>
<dbReference type="InterPro" id="IPR051681">
    <property type="entry name" value="Ser/Thr_Kinases-Pseudokinases"/>
</dbReference>
<dbReference type="InterPro" id="IPR036028">
    <property type="entry name" value="SH3-like_dom_sf"/>
</dbReference>
<dbReference type="InterPro" id="IPR001452">
    <property type="entry name" value="SH3_domain"/>
</dbReference>
<dbReference type="PANTHER" id="PTHR44329:SF46">
    <property type="entry name" value="MITOGEN-ACTIVATED PROTEIN KINASE KINASE KINASE 11"/>
    <property type="match status" value="1"/>
</dbReference>
<dbReference type="PANTHER" id="PTHR44329">
    <property type="entry name" value="SERINE/THREONINE-PROTEIN KINASE TNNI3K-RELATED"/>
    <property type="match status" value="1"/>
</dbReference>
<dbReference type="Pfam" id="PF07714">
    <property type="entry name" value="PK_Tyr_Ser-Thr"/>
    <property type="match status" value="1"/>
</dbReference>
<dbReference type="Pfam" id="PF14604">
    <property type="entry name" value="SH3_9"/>
    <property type="match status" value="1"/>
</dbReference>
<dbReference type="PIRSF" id="PIRSF000556">
    <property type="entry name" value="MAPKKK9_11"/>
    <property type="match status" value="1"/>
</dbReference>
<dbReference type="PRINTS" id="PR00452">
    <property type="entry name" value="SH3DOMAIN"/>
</dbReference>
<dbReference type="PRINTS" id="PR00109">
    <property type="entry name" value="TYRKINASE"/>
</dbReference>
<dbReference type="SMART" id="SM00220">
    <property type="entry name" value="S_TKc"/>
    <property type="match status" value="1"/>
</dbReference>
<dbReference type="SMART" id="SM00326">
    <property type="entry name" value="SH3"/>
    <property type="match status" value="1"/>
</dbReference>
<dbReference type="SUPFAM" id="SSF56112">
    <property type="entry name" value="Protein kinase-like (PK-like)"/>
    <property type="match status" value="1"/>
</dbReference>
<dbReference type="SUPFAM" id="SSF50044">
    <property type="entry name" value="SH3-domain"/>
    <property type="match status" value="1"/>
</dbReference>
<dbReference type="PROSITE" id="PS00107">
    <property type="entry name" value="PROTEIN_KINASE_ATP"/>
    <property type="match status" value="1"/>
</dbReference>
<dbReference type="PROSITE" id="PS50011">
    <property type="entry name" value="PROTEIN_KINASE_DOM"/>
    <property type="match status" value="1"/>
</dbReference>
<dbReference type="PROSITE" id="PS00108">
    <property type="entry name" value="PROTEIN_KINASE_ST"/>
    <property type="match status" value="1"/>
</dbReference>
<dbReference type="PROSITE" id="PS50002">
    <property type="entry name" value="SH3"/>
    <property type="match status" value="1"/>
</dbReference>
<gene>
    <name evidence="25" type="primary">MAP3K11</name>
    <name evidence="19" type="synonym">MLK3</name>
    <name type="synonym">PTK1</name>
    <name evidence="21" type="synonym">SPRK</name>
</gene>
<comment type="function">
    <text evidence="10 11 15 16">Activates the JUN N-terminal pathway. Required for serum-stimulated cell proliferation and for mitogen and cytokine activation of MAPK14 (p38), MAPK3 (ERK) and MAPK8 (JNK1) through phosphorylation and activation of MAP2K4/MKK4 and MAP2K7/MKK7. Plays a role in mitogen-stimulated phosphorylation and activation of BRAF, but does not phosphorylate BRAF directly. Influences microtubule organization during the cell cycle.</text>
</comment>
<comment type="catalytic activity">
    <reaction evidence="15">
        <text>L-seryl-[protein] + ATP = O-phospho-L-seryl-[protein] + ADP + H(+)</text>
        <dbReference type="Rhea" id="RHEA:17989"/>
        <dbReference type="Rhea" id="RHEA-COMP:9863"/>
        <dbReference type="Rhea" id="RHEA-COMP:11604"/>
        <dbReference type="ChEBI" id="CHEBI:15378"/>
        <dbReference type="ChEBI" id="CHEBI:29999"/>
        <dbReference type="ChEBI" id="CHEBI:30616"/>
        <dbReference type="ChEBI" id="CHEBI:83421"/>
        <dbReference type="ChEBI" id="CHEBI:456216"/>
        <dbReference type="EC" id="2.7.11.25"/>
    </reaction>
</comment>
<comment type="catalytic activity">
    <reaction evidence="15">
        <text>L-threonyl-[protein] + ATP = O-phospho-L-threonyl-[protein] + ADP + H(+)</text>
        <dbReference type="Rhea" id="RHEA:46608"/>
        <dbReference type="Rhea" id="RHEA-COMP:11060"/>
        <dbReference type="Rhea" id="RHEA-COMP:11605"/>
        <dbReference type="ChEBI" id="CHEBI:15378"/>
        <dbReference type="ChEBI" id="CHEBI:30013"/>
        <dbReference type="ChEBI" id="CHEBI:30616"/>
        <dbReference type="ChEBI" id="CHEBI:61977"/>
        <dbReference type="ChEBI" id="CHEBI:456216"/>
        <dbReference type="EC" id="2.7.11.25"/>
    </reaction>
</comment>
<comment type="cofactor">
    <cofactor evidence="1">
        <name>Mg(2+)</name>
        <dbReference type="ChEBI" id="CHEBI:18420"/>
    </cofactor>
</comment>
<comment type="activity regulation">
    <text evidence="8 17">Homodimerization via the leucine zipper domains is required for autophosphorylation and subsequent activation.</text>
</comment>
<comment type="subunit">
    <text evidence="3 16 17">Homodimer; undergoes dimerization during activation (PubMed:9829970). Interacts with MAP2K4/MKK4 (By similarity). Interacts with MAP2K7/MKK7 (PubMed:9003778). Found in a complex with SH3RF1, RAC1, MAP2K7/MKK7, MAPK8IP1/JIP1 and MAPK8/JNK1 (By similarity).</text>
</comment>
<comment type="interaction">
    <interactant intactId="EBI-49961">
        <id>Q16584</id>
    </interactant>
    <interactant intactId="EBI-81752">
        <id>P60953</id>
        <label>CDC42</label>
    </interactant>
    <organismsDiffer>false</organismsDiffer>
    <experiments>3</experiments>
</comment>
<comment type="interaction">
    <interactant intactId="EBI-49961">
        <id>Q16584</id>
    </interactant>
    <interactant intactId="EBI-1014472">
        <id>P35240</id>
        <label>NF2</label>
    </interactant>
    <organismsDiffer>false</organismsDiffer>
    <experiments>4</experiments>
</comment>
<comment type="interaction">
    <interactant intactId="EBI-49961">
        <id>Q16584</id>
    </interactant>
    <interactant intactId="EBI-2906801">
        <id>P70218</id>
        <label>Map4k1</label>
    </interactant>
    <organismsDiffer>true</organismsDiffer>
    <experiments>3</experiments>
</comment>
<comment type="interaction">
    <interactant intactId="EBI-49961">
        <id>Q16584</id>
    </interactant>
    <interactant intactId="EBI-6927873">
        <id>PRO_0000045602</id>
        <dbReference type="UniProtKB" id="Q99IB8"/>
    </interactant>
    <organismsDiffer>true</organismsDiffer>
    <experiments>5</experiments>
</comment>
<comment type="subcellular location">
    <subcellularLocation>
        <location evidence="10">Cytoplasm</location>
        <location evidence="10">Cytoskeleton</location>
        <location evidence="10">Microtubule organizing center</location>
        <location evidence="10">Centrosome</location>
    </subcellularLocation>
    <text>Location is cell cycle dependent.</text>
</comment>
<comment type="alternative products">
    <event type="alternative splicing"/>
    <isoform>
        <id>Q16584-1</id>
        <name>1</name>
        <sequence type="displayed"/>
    </isoform>
    <isoform>
        <id>Q16584-2</id>
        <name>2</name>
        <sequence type="described" ref="VSP_056183"/>
    </isoform>
</comment>
<comment type="tissue specificity">
    <text evidence="14 15">Expressed in a wide variety of normal and neoplastic tissues including fetal lung, liver, heart and kidney, and adult lung, liver, heart, kidney, placenta, skeletal muscle, pancreas and brain.</text>
</comment>
<comment type="PTM">
    <text evidence="8 9 15">Autophosphorylation on serine and threonine residues within the activation loop plays a role in enzyme activation. Thr-277 is likely to be the main autophosphorylation site. Phosphorylation of Ser-555 and Ser-556 is induced by CDC42.</text>
</comment>
<comment type="similarity">
    <text evidence="20">Belongs to the protein kinase superfamily. STE Ser/Thr protein kinase family. MAP kinase kinase kinase subfamily.</text>
</comment>
<comment type="sequence caution" evidence="20">
    <conflict type="erroneous initiation">
        <sequence resource="EMBL-CDS" id="BAD92892"/>
    </conflict>
</comment>
<organism>
    <name type="scientific">Homo sapiens</name>
    <name type="common">Human</name>
    <dbReference type="NCBI Taxonomy" id="9606"/>
    <lineage>
        <taxon>Eukaryota</taxon>
        <taxon>Metazoa</taxon>
        <taxon>Chordata</taxon>
        <taxon>Craniata</taxon>
        <taxon>Vertebrata</taxon>
        <taxon>Euteleostomi</taxon>
        <taxon>Mammalia</taxon>
        <taxon>Eutheria</taxon>
        <taxon>Euarchontoglires</taxon>
        <taxon>Primates</taxon>
        <taxon>Haplorrhini</taxon>
        <taxon>Catarrhini</taxon>
        <taxon>Hominidae</taxon>
        <taxon>Homo</taxon>
    </lineage>
</organism>
<feature type="chain" id="PRO_0000086260" description="Mitogen-activated protein kinase kinase kinase 11">
    <location>
        <begin position="1"/>
        <end position="847"/>
    </location>
</feature>
<feature type="domain" description="SH3" evidence="5">
    <location>
        <begin position="41"/>
        <end position="105"/>
    </location>
</feature>
<feature type="domain" description="Protein kinase" evidence="4">
    <location>
        <begin position="117"/>
        <end position="379"/>
    </location>
</feature>
<feature type="region of interest" description="Disordered" evidence="7">
    <location>
        <begin position="11"/>
        <end position="38"/>
    </location>
</feature>
<feature type="region of interest" description="Leucine-zipper 1">
    <location>
        <begin position="403"/>
        <end position="424"/>
    </location>
</feature>
<feature type="region of interest" description="Leucine-zipper 2">
    <location>
        <begin position="438"/>
        <end position="459"/>
    </location>
</feature>
<feature type="region of interest" description="Disordered" evidence="7">
    <location>
        <begin position="537"/>
        <end position="643"/>
    </location>
</feature>
<feature type="region of interest" description="Disordered" evidence="7">
    <location>
        <begin position="655"/>
        <end position="847"/>
    </location>
</feature>
<feature type="compositionally biased region" description="Gly residues" evidence="7">
    <location>
        <begin position="17"/>
        <end position="32"/>
    </location>
</feature>
<feature type="compositionally biased region" description="Basic and acidic residues" evidence="7">
    <location>
        <begin position="550"/>
        <end position="562"/>
    </location>
</feature>
<feature type="compositionally biased region" description="Low complexity" evidence="7">
    <location>
        <begin position="597"/>
        <end position="609"/>
    </location>
</feature>
<feature type="compositionally biased region" description="Pro residues" evidence="7">
    <location>
        <begin position="676"/>
        <end position="694"/>
    </location>
</feature>
<feature type="compositionally biased region" description="Low complexity" evidence="7">
    <location>
        <begin position="760"/>
        <end position="773"/>
    </location>
</feature>
<feature type="compositionally biased region" description="Pro residues" evidence="7">
    <location>
        <begin position="787"/>
        <end position="799"/>
    </location>
</feature>
<feature type="compositionally biased region" description="Low complexity" evidence="7">
    <location>
        <begin position="800"/>
        <end position="816"/>
    </location>
</feature>
<feature type="active site" description="Proton acceptor" evidence="2 4 6">
    <location>
        <position position="241"/>
    </location>
</feature>
<feature type="binding site" evidence="2 4">
    <location>
        <begin position="123"/>
        <end position="131"/>
    </location>
    <ligand>
        <name>ATP</name>
        <dbReference type="ChEBI" id="CHEBI:30616"/>
    </ligand>
</feature>
<feature type="binding site" evidence="4 8 15">
    <location>
        <position position="144"/>
    </location>
    <ligand>
        <name>ATP</name>
        <dbReference type="ChEBI" id="CHEBI:30616"/>
    </ligand>
</feature>
<feature type="modified residue" description="Phosphoserine" evidence="28">
    <location>
        <position position="11"/>
    </location>
</feature>
<feature type="modified residue" description="Phosphoserine" evidence="3">
    <location>
        <position position="35"/>
    </location>
</feature>
<feature type="modified residue" description="Phosphothreonine; by autocatalysis" evidence="8">
    <location>
        <position position="277"/>
    </location>
</feature>
<feature type="modified residue" description="Phosphoserine; by autocatalysis and MAP4K1" evidence="8">
    <location>
        <position position="281"/>
    </location>
</feature>
<feature type="modified residue" description="Phosphoserine" evidence="29">
    <location>
        <position position="394"/>
    </location>
</feature>
<feature type="modified residue" description="Phosphoserine" evidence="26 28 29 31">
    <location>
        <position position="507"/>
    </location>
</feature>
<feature type="modified residue" description="Phosphoserine" evidence="9 31">
    <location>
        <position position="524"/>
    </location>
</feature>
<feature type="modified residue" description="Phosphoserine" evidence="28 29 31">
    <location>
        <position position="548"/>
    </location>
</feature>
<feature type="modified residue" description="Phosphoserine" evidence="9">
    <location>
        <position position="555"/>
    </location>
</feature>
<feature type="modified residue" description="Phosphoserine" evidence="9">
    <location>
        <position position="556"/>
    </location>
</feature>
<feature type="modified residue" description="Phosphoserine" evidence="9">
    <location>
        <position position="654"/>
    </location>
</feature>
<feature type="modified residue" description="Phosphoserine" evidence="29">
    <location>
        <position position="693"/>
    </location>
</feature>
<feature type="modified residue" description="Phosphoserine" evidence="9 28 29">
    <location>
        <position position="705"/>
    </location>
</feature>
<feature type="modified residue" description="Phosphothreonine" evidence="28">
    <location>
        <position position="708"/>
    </location>
</feature>
<feature type="modified residue" description="Phosphoserine" evidence="9">
    <location>
        <position position="724"/>
    </location>
</feature>
<feature type="modified residue" description="Phosphoserine" evidence="9">
    <location>
        <position position="727"/>
    </location>
</feature>
<feature type="modified residue" description="Phosphoserine" evidence="9">
    <location>
        <position position="740"/>
    </location>
</feature>
<feature type="modified residue" description="Phosphoserine" evidence="28 29">
    <location>
        <position position="748"/>
    </location>
</feature>
<feature type="modified residue" description="Phosphoserine" evidence="9 28 29">
    <location>
        <position position="758"/>
    </location>
</feature>
<feature type="modified residue" description="Phosphoserine" evidence="9">
    <location>
        <position position="770"/>
    </location>
</feature>
<feature type="modified residue" description="Phosphoserine" evidence="27 29 30">
    <location>
        <position position="789"/>
    </location>
</feature>
<feature type="modified residue" description="Phosphoserine" evidence="9 27 28 29 30">
    <location>
        <position position="793"/>
    </location>
</feature>
<feature type="modified residue" description="Phosphoserine" evidence="28">
    <location>
        <position position="815"/>
    </location>
</feature>
<feature type="splice variant" id="VSP_056183" description="In isoform 2." evidence="18">
    <location>
        <begin position="1"/>
        <end position="257"/>
    </location>
</feature>
<feature type="sequence variant" id="VAR_040703" description="In dbSNP:rs34178129." evidence="13">
    <original>D</original>
    <variation>V</variation>
    <location>
        <position position="151"/>
    </location>
</feature>
<feature type="sequence variant" id="VAR_030604" description="In dbSNP:rs17855912." evidence="12">
    <original>P</original>
    <variation>H</variation>
    <location>
        <position position="252"/>
    </location>
</feature>
<feature type="sequence variant" id="VAR_040704" description="In dbSNP:rs34594252." evidence="13">
    <original>A</original>
    <variation>G</variation>
    <location>
        <position position="282"/>
    </location>
</feature>
<feature type="mutagenesis site" description="Greatly reduced autophosphorylation activity." evidence="8 15">
    <original>K</original>
    <variation>A</variation>
    <location>
        <position position="144"/>
    </location>
</feature>
<feature type="mutagenesis site" description="Loss of kinase activity. Prevents activation of SAPK and MAPK14." evidence="8 15">
    <original>K</original>
    <variation>R</variation>
    <location>
        <position position="144"/>
    </location>
</feature>
<feature type="mutagenesis site" description="Greatly reduced autophosphorylation activity." evidence="15">
    <original>E</original>
    <variation>A</variation>
    <location>
        <position position="164"/>
    </location>
</feature>
<feature type="mutagenesis site" description="Severely reduced autophosphorylation activity. Prevents phosphorylation of SAPK and MAPK14." evidence="8">
    <original>T</original>
    <variation>A</variation>
    <location>
        <position position="277"/>
    </location>
</feature>
<feature type="mutagenesis site" description="No effect on SAPK activation." evidence="8">
    <original>T</original>
    <variation>E</variation>
    <location>
        <position position="277"/>
    </location>
</feature>
<feature type="mutagenesis site" description="No effect on autophosphorylation activity or activation of SAPK and MAPK14." evidence="8">
    <original>T</original>
    <variation>A</variation>
    <location>
        <position position="278"/>
    </location>
</feature>
<feature type="mutagenesis site" description="Reduced autophosphorylation activity. Reduced activation of SAPK and MAPK14." evidence="8">
    <original>S</original>
    <variation>A</variation>
    <location>
        <position position="281"/>
    </location>
</feature>
<feature type="mutagenesis site" description="No effect on SAPK activation." evidence="8">
    <original>S</original>
    <variation>E</variation>
    <location>
        <position position="281"/>
    </location>
</feature>
<feature type="sequence conflict" description="In Ref. 4; BAD92892." evidence="20" ref="4">
    <original>ILLLQPIESDDMEHKTLKITDFGLAR</original>
    <variation>SEFLGAWLGVAWLWYTPAPNLPLSLA</variation>
    <location>
        <begin position="247"/>
        <end position="272"/>
    </location>
</feature>
<feature type="sequence conflict" description="In Ref. 4; BAD96501." evidence="20" ref="4">
    <original>L</original>
    <variation>P</variation>
    <location>
        <position position="791"/>
    </location>
</feature>
<feature type="strand" evidence="32">
    <location>
        <begin position="45"/>
        <end position="50"/>
    </location>
</feature>
<feature type="strand" evidence="32">
    <location>
        <begin position="67"/>
        <end position="73"/>
    </location>
</feature>
<feature type="helix" evidence="32">
    <location>
        <begin position="78"/>
        <end position="80"/>
    </location>
</feature>
<feature type="strand" evidence="32">
    <location>
        <begin position="83"/>
        <end position="88"/>
    </location>
</feature>
<feature type="strand" evidence="32">
    <location>
        <begin position="91"/>
        <end position="96"/>
    </location>
</feature>
<feature type="helix" evidence="32">
    <location>
        <begin position="97"/>
        <end position="99"/>
    </location>
</feature>
<feature type="strand" evidence="32">
    <location>
        <begin position="100"/>
        <end position="105"/>
    </location>
</feature>
<protein>
    <recommendedName>
        <fullName>Mitogen-activated protein kinase kinase kinase 11</fullName>
        <ecNumber>2.7.11.25</ecNumber>
    </recommendedName>
    <alternativeName>
        <fullName>Mixed lineage kinase 3</fullName>
    </alternativeName>
    <alternativeName>
        <fullName>Src-homology 3 domain-containing proline-rich kinase</fullName>
    </alternativeName>
</protein>
<keyword id="KW-0002">3D-structure</keyword>
<keyword id="KW-0025">Alternative splicing</keyword>
<keyword id="KW-0067">ATP-binding</keyword>
<keyword id="KW-0963">Cytoplasm</keyword>
<keyword id="KW-0206">Cytoskeleton</keyword>
<keyword id="KW-0418">Kinase</keyword>
<keyword id="KW-0547">Nucleotide-binding</keyword>
<keyword id="KW-0597">Phosphoprotein</keyword>
<keyword id="KW-1267">Proteomics identification</keyword>
<keyword id="KW-1185">Reference proteome</keyword>
<keyword id="KW-0677">Repeat</keyword>
<keyword id="KW-0723">Serine/threonine-protein kinase</keyword>
<keyword id="KW-0728">SH3 domain</keyword>
<keyword id="KW-0808">Transferase</keyword>
<sequence length="847" mass="92688">MEPLKSLFLKSPLGSWNGSGSGGGGGGGGGRPEGSPKAAGYANPVWTALFDYEPSGQDELALRKGDRVEVLSRDAAISGDEGWWAGQVGGQVGIFPSNYVSRGGGPPPCEVASFQELRLEEVIGIGGFGKVYRGSWRGELVAVKAARQDPDEDISVTAESVRQEARLFAMLAHPNIIALKAVCLEEPNLCLVMEYAAGGPLSRALAGRRVPPHVLVNWAVQIARGMHYLHCEALVPVIHRDLKSNNILLLQPIESDDMEHKTLKITDFGLAREWHKTTQMSAAGTYAWMAPEVIKASTFSKGSDVWSFGVLLWELLTGEVPYRGIDCLAVAYGVAVNKLTLPIPSTCPEPFAQLMADCWAQDPHRRPDFASILQQLEALEAQVLREMPRDSFHSMQEGWKREIQGLFDELRAKEKELLSREEELTRAAREQRSQAEQLRRREHLLAQWELEVFERELTLLLQQVDRERPHVRRRRGTFKRSKLRARDGGERISMPLDFKHRITVQASPGLDRRRNVFEVGPGDSPTFPRFRAIQLEPAEPGQAWGRQSPRRLEDSSNGERRACWAWGPSSPKPGEAQNGRRRSRMDEATWYLDSDDSSPLGSPSTPPALNGNPPRPSLEPEEPKRPVPAERGSSSGTPKLIQRALLRGTALLASLGLGRDLQPPGGPGRERGESPTTPPTPTPAPCPTEPPPSPLICFSLKTPDSPPTPAPLLLDLGIPVGQRSAKSPRREEEPRGGTVSPPPGTSRSAPGTPGTPRSPPLGLISRPRPSPLRSRIDPWSFVSAGPRPSPLPSPQPAPRRAPWTLFPDSDPFWDSPPANPFQGGPQDCRAQTKDMGAQAPWVPEAGP</sequence>
<name>M3K11_HUMAN</name>
<accession>Q16584</accession>
<accession>B4DS76</accession>
<accession>Q53H00</accession>
<accession>Q59F06</accession>
<accession>Q6P2G4</accession>
<evidence type="ECO:0000250" key="1">
    <source>
        <dbReference type="UniProtKB" id="P80192"/>
    </source>
</evidence>
<evidence type="ECO:0000250" key="2">
    <source>
        <dbReference type="UniProtKB" id="Q02779"/>
    </source>
</evidence>
<evidence type="ECO:0000250" key="3">
    <source>
        <dbReference type="UniProtKB" id="Q80XI6"/>
    </source>
</evidence>
<evidence type="ECO:0000255" key="4">
    <source>
        <dbReference type="PROSITE-ProRule" id="PRU00159"/>
    </source>
</evidence>
<evidence type="ECO:0000255" key="5">
    <source>
        <dbReference type="PROSITE-ProRule" id="PRU00192"/>
    </source>
</evidence>
<evidence type="ECO:0000255" key="6">
    <source>
        <dbReference type="PROSITE-ProRule" id="PRU10027"/>
    </source>
</evidence>
<evidence type="ECO:0000256" key="7">
    <source>
        <dbReference type="SAM" id="MobiDB-lite"/>
    </source>
</evidence>
<evidence type="ECO:0000269" key="8">
    <source>
    </source>
</evidence>
<evidence type="ECO:0000269" key="9">
    <source>
    </source>
</evidence>
<evidence type="ECO:0000269" key="10">
    <source>
    </source>
</evidence>
<evidence type="ECO:0000269" key="11">
    <source>
    </source>
</evidence>
<evidence type="ECO:0000269" key="12">
    <source>
    </source>
</evidence>
<evidence type="ECO:0000269" key="13">
    <source>
    </source>
</evidence>
<evidence type="ECO:0000269" key="14">
    <source>
    </source>
</evidence>
<evidence type="ECO:0000269" key="15">
    <source>
    </source>
</evidence>
<evidence type="ECO:0000269" key="16">
    <source>
    </source>
</evidence>
<evidence type="ECO:0000269" key="17">
    <source>
    </source>
</evidence>
<evidence type="ECO:0000303" key="18">
    <source>
    </source>
</evidence>
<evidence type="ECO:0000303" key="19">
    <source>
    </source>
</evidence>
<evidence type="ECO:0000305" key="20"/>
<evidence type="ECO:0000312" key="21">
    <source>
        <dbReference type="EMBL" id="AAA19647.1"/>
    </source>
</evidence>
<evidence type="ECO:0000312" key="22">
    <source>
        <dbReference type="EMBL" id="AAA59859.1"/>
    </source>
</evidence>
<evidence type="ECO:0000312" key="23">
    <source>
        <dbReference type="EMBL" id="AAH11263.1"/>
    </source>
</evidence>
<evidence type="ECO:0000312" key="24">
    <source>
        <dbReference type="EMBL" id="AAH64543.1"/>
    </source>
</evidence>
<evidence type="ECO:0000312" key="25">
    <source>
        <dbReference type="HGNC" id="HGNC:6850"/>
    </source>
</evidence>
<evidence type="ECO:0007744" key="26">
    <source>
    </source>
</evidence>
<evidence type="ECO:0007744" key="27">
    <source>
    </source>
</evidence>
<evidence type="ECO:0007744" key="28">
    <source>
    </source>
</evidence>
<evidence type="ECO:0007744" key="29">
    <source>
    </source>
</evidence>
<evidence type="ECO:0007744" key="30">
    <source>
    </source>
</evidence>
<evidence type="ECO:0007744" key="31">
    <source>
    </source>
</evidence>
<evidence type="ECO:0007829" key="32">
    <source>
        <dbReference type="PDB" id="5K26"/>
    </source>
</evidence>